<accession>C0H463</accession>
<feature type="chain" id="PRO_0000380086" description="Uncharacterized membrane protein YrzS">
    <location>
        <begin position="1"/>
        <end position="66"/>
    </location>
</feature>
<feature type="transmembrane region" description="Helical" evidence="1">
    <location>
        <begin position="6"/>
        <end position="26"/>
    </location>
</feature>
<feature type="transmembrane region" description="Helical" evidence="1">
    <location>
        <begin position="39"/>
        <end position="59"/>
    </location>
</feature>
<comment type="subcellular location">
    <subcellularLocation>
        <location evidence="2">Cell membrane</location>
        <topology evidence="2">Multi-pass membrane protein</topology>
    </subcellularLocation>
</comment>
<keyword id="KW-1003">Cell membrane</keyword>
<keyword id="KW-0472">Membrane</keyword>
<keyword id="KW-1185">Reference proteome</keyword>
<keyword id="KW-0812">Transmembrane</keyword>
<keyword id="KW-1133">Transmembrane helix</keyword>
<organism>
    <name type="scientific">Bacillus subtilis (strain 168)</name>
    <dbReference type="NCBI Taxonomy" id="224308"/>
    <lineage>
        <taxon>Bacteria</taxon>
        <taxon>Bacillati</taxon>
        <taxon>Bacillota</taxon>
        <taxon>Bacilli</taxon>
        <taxon>Bacillales</taxon>
        <taxon>Bacillaceae</taxon>
        <taxon>Bacillus</taxon>
    </lineage>
</organism>
<reference key="1">
    <citation type="journal article" date="1997" name="Nature">
        <title>The complete genome sequence of the Gram-positive bacterium Bacillus subtilis.</title>
        <authorList>
            <person name="Kunst F."/>
            <person name="Ogasawara N."/>
            <person name="Moszer I."/>
            <person name="Albertini A.M."/>
            <person name="Alloni G."/>
            <person name="Azevedo V."/>
            <person name="Bertero M.G."/>
            <person name="Bessieres P."/>
            <person name="Bolotin A."/>
            <person name="Borchert S."/>
            <person name="Borriss R."/>
            <person name="Boursier L."/>
            <person name="Brans A."/>
            <person name="Braun M."/>
            <person name="Brignell S.C."/>
            <person name="Bron S."/>
            <person name="Brouillet S."/>
            <person name="Bruschi C.V."/>
            <person name="Caldwell B."/>
            <person name="Capuano V."/>
            <person name="Carter N.M."/>
            <person name="Choi S.-K."/>
            <person name="Codani J.-J."/>
            <person name="Connerton I.F."/>
            <person name="Cummings N.J."/>
            <person name="Daniel R.A."/>
            <person name="Denizot F."/>
            <person name="Devine K.M."/>
            <person name="Duesterhoeft A."/>
            <person name="Ehrlich S.D."/>
            <person name="Emmerson P.T."/>
            <person name="Entian K.-D."/>
            <person name="Errington J."/>
            <person name="Fabret C."/>
            <person name="Ferrari E."/>
            <person name="Foulger D."/>
            <person name="Fritz C."/>
            <person name="Fujita M."/>
            <person name="Fujita Y."/>
            <person name="Fuma S."/>
            <person name="Galizzi A."/>
            <person name="Galleron N."/>
            <person name="Ghim S.-Y."/>
            <person name="Glaser P."/>
            <person name="Goffeau A."/>
            <person name="Golightly E.J."/>
            <person name="Grandi G."/>
            <person name="Guiseppi G."/>
            <person name="Guy B.J."/>
            <person name="Haga K."/>
            <person name="Haiech J."/>
            <person name="Harwood C.R."/>
            <person name="Henaut A."/>
            <person name="Hilbert H."/>
            <person name="Holsappel S."/>
            <person name="Hosono S."/>
            <person name="Hullo M.-F."/>
            <person name="Itaya M."/>
            <person name="Jones L.-M."/>
            <person name="Joris B."/>
            <person name="Karamata D."/>
            <person name="Kasahara Y."/>
            <person name="Klaerr-Blanchard M."/>
            <person name="Klein C."/>
            <person name="Kobayashi Y."/>
            <person name="Koetter P."/>
            <person name="Koningstein G."/>
            <person name="Krogh S."/>
            <person name="Kumano M."/>
            <person name="Kurita K."/>
            <person name="Lapidus A."/>
            <person name="Lardinois S."/>
            <person name="Lauber J."/>
            <person name="Lazarevic V."/>
            <person name="Lee S.-M."/>
            <person name="Levine A."/>
            <person name="Liu H."/>
            <person name="Masuda S."/>
            <person name="Mauel C."/>
            <person name="Medigue C."/>
            <person name="Medina N."/>
            <person name="Mellado R.P."/>
            <person name="Mizuno M."/>
            <person name="Moestl D."/>
            <person name="Nakai S."/>
            <person name="Noback M."/>
            <person name="Noone D."/>
            <person name="O'Reilly M."/>
            <person name="Ogawa K."/>
            <person name="Ogiwara A."/>
            <person name="Oudega B."/>
            <person name="Park S.-H."/>
            <person name="Parro V."/>
            <person name="Pohl T.M."/>
            <person name="Portetelle D."/>
            <person name="Porwollik S."/>
            <person name="Prescott A.M."/>
            <person name="Presecan E."/>
            <person name="Pujic P."/>
            <person name="Purnelle B."/>
            <person name="Rapoport G."/>
            <person name="Rey M."/>
            <person name="Reynolds S."/>
            <person name="Rieger M."/>
            <person name="Rivolta C."/>
            <person name="Rocha E."/>
            <person name="Roche B."/>
            <person name="Rose M."/>
            <person name="Sadaie Y."/>
            <person name="Sato T."/>
            <person name="Scanlan E."/>
            <person name="Schleich S."/>
            <person name="Schroeter R."/>
            <person name="Scoffone F."/>
            <person name="Sekiguchi J."/>
            <person name="Sekowska A."/>
            <person name="Seror S.J."/>
            <person name="Serror P."/>
            <person name="Shin B.-S."/>
            <person name="Soldo B."/>
            <person name="Sorokin A."/>
            <person name="Tacconi E."/>
            <person name="Takagi T."/>
            <person name="Takahashi H."/>
            <person name="Takemaru K."/>
            <person name="Takeuchi M."/>
            <person name="Tamakoshi A."/>
            <person name="Tanaka T."/>
            <person name="Terpstra P."/>
            <person name="Tognoni A."/>
            <person name="Tosato V."/>
            <person name="Uchiyama S."/>
            <person name="Vandenbol M."/>
            <person name="Vannier F."/>
            <person name="Vassarotti A."/>
            <person name="Viari A."/>
            <person name="Wambutt R."/>
            <person name="Wedler E."/>
            <person name="Wedler H."/>
            <person name="Weitzenegger T."/>
            <person name="Winters P."/>
            <person name="Wipat A."/>
            <person name="Yamamoto H."/>
            <person name="Yamane K."/>
            <person name="Yasumoto K."/>
            <person name="Yata K."/>
            <person name="Yoshida K."/>
            <person name="Yoshikawa H.-F."/>
            <person name="Zumstein E."/>
            <person name="Yoshikawa H."/>
            <person name="Danchin A."/>
        </authorList>
    </citation>
    <scope>NUCLEOTIDE SEQUENCE [LARGE SCALE GENOMIC DNA]</scope>
    <source>
        <strain>168</strain>
    </source>
</reference>
<sequence length="66" mass="7265">MTEFPKIIMILGAVLLIIGAVLHFVGKMPGDIFVKKGNVTFFFPVVTCIIISVVLSILLNLFGRMK</sequence>
<gene>
    <name type="primary">yrzS</name>
    <name type="ordered locus">BSU27729</name>
</gene>
<proteinExistence type="predicted"/>
<dbReference type="EMBL" id="AL009126">
    <property type="protein sequence ID" value="CAX52674.1"/>
    <property type="molecule type" value="Genomic_DNA"/>
</dbReference>
<dbReference type="RefSeq" id="WP_003222669.1">
    <property type="nucleotide sequence ID" value="NZ_OZ025638.1"/>
</dbReference>
<dbReference type="RefSeq" id="YP_003097768.1">
    <property type="nucleotide sequence ID" value="NC_000964.3"/>
</dbReference>
<dbReference type="SMR" id="C0H463"/>
<dbReference type="FunCoup" id="C0H463">
    <property type="interactions" value="31"/>
</dbReference>
<dbReference type="STRING" id="224308.BSU27729"/>
<dbReference type="PaxDb" id="224308-BSU27729"/>
<dbReference type="EnsemblBacteria" id="CAX52674">
    <property type="protein sequence ID" value="CAX52674"/>
    <property type="gene ID" value="BSU_27729"/>
</dbReference>
<dbReference type="GeneID" id="8303137"/>
<dbReference type="KEGG" id="bsu:BSU27729"/>
<dbReference type="PATRIC" id="fig|224308.179.peg.3012"/>
<dbReference type="eggNOG" id="ENOG5032YVX">
    <property type="taxonomic scope" value="Bacteria"/>
</dbReference>
<dbReference type="InParanoid" id="C0H463"/>
<dbReference type="OrthoDB" id="9811610at2"/>
<dbReference type="BioCyc" id="BSUB:BSU27729-MONOMER"/>
<dbReference type="PRO" id="PR:C0H463"/>
<dbReference type="Proteomes" id="UP000001570">
    <property type="component" value="Chromosome"/>
</dbReference>
<dbReference type="GO" id="GO:0005886">
    <property type="term" value="C:plasma membrane"/>
    <property type="evidence" value="ECO:0007669"/>
    <property type="project" value="UniProtKB-SubCell"/>
</dbReference>
<dbReference type="InterPro" id="IPR021320">
    <property type="entry name" value="DUF2905"/>
</dbReference>
<dbReference type="PANTHER" id="PTHR36443">
    <property type="entry name" value="BSR5223 PROTEIN"/>
    <property type="match status" value="1"/>
</dbReference>
<dbReference type="PANTHER" id="PTHR36443:SF1">
    <property type="entry name" value="BSR5223 PROTEIN"/>
    <property type="match status" value="1"/>
</dbReference>
<dbReference type="Pfam" id="PF11146">
    <property type="entry name" value="DUF2905"/>
    <property type="match status" value="1"/>
</dbReference>
<evidence type="ECO:0000255" key="1"/>
<evidence type="ECO:0000305" key="2"/>
<name>YRZS_BACSU</name>
<protein>
    <recommendedName>
        <fullName>Uncharacterized membrane protein YrzS</fullName>
    </recommendedName>
</protein>